<keyword id="KW-1185">Reference proteome</keyword>
<proteinExistence type="predicted"/>
<gene>
    <name type="primary">y07C</name>
    <name type="synonym">ipi.-2</name>
    <name type="synonym">trnA.3</name>
</gene>
<feature type="chain" id="PRO_0000165152" description="Uncharacterized 16.0 kDa protein in segB-ipI intergenic region">
    <location>
        <begin position="1"/>
        <end position="136"/>
    </location>
</feature>
<accession>P13323</accession>
<organism>
    <name type="scientific">Enterobacteria phage T4</name>
    <name type="common">Bacteriophage T4</name>
    <dbReference type="NCBI Taxonomy" id="10665"/>
    <lineage>
        <taxon>Viruses</taxon>
        <taxon>Duplodnaviria</taxon>
        <taxon>Heunggongvirae</taxon>
        <taxon>Uroviricota</taxon>
        <taxon>Caudoviricetes</taxon>
        <taxon>Straboviridae</taxon>
        <taxon>Tevenvirinae</taxon>
        <taxon>Tequatrovirus</taxon>
    </lineage>
</organism>
<organismHost>
    <name type="scientific">Escherichia coli</name>
    <dbReference type="NCBI Taxonomy" id="562"/>
</organismHost>
<name>Y07C_BPT4</name>
<protein>
    <recommendedName>
        <fullName>Uncharacterized 16.0 kDa protein in segB-ipI intergenic region</fullName>
    </recommendedName>
    <alternativeName>
        <fullName>ORF3</fullName>
    </alternativeName>
</protein>
<dbReference type="EMBL" id="X03016">
    <property type="protein sequence ID" value="CAA26805.1"/>
    <property type="molecule type" value="Genomic_DNA"/>
</dbReference>
<dbReference type="EMBL" id="AF158101">
    <property type="protein sequence ID" value="AAD42681.1"/>
    <property type="molecule type" value="Genomic_DNA"/>
</dbReference>
<dbReference type="RefSeq" id="NP_049747.1">
    <property type="nucleotide sequence ID" value="NC_000866.4"/>
</dbReference>
<dbReference type="GeneID" id="1258589"/>
<dbReference type="KEGG" id="vg:1258589"/>
<dbReference type="OrthoDB" id="13265at10239"/>
<dbReference type="Proteomes" id="UP000009087">
    <property type="component" value="Segment"/>
</dbReference>
<sequence length="136" mass="16035">MSINEYYVYAGDYANPSHFEGNLIPDKVFNTPFEAWSWIESKNGFSYRYVEVTDWRGTKYPKDHYYVNPSKVNFLLFAGDNYYPCGGYDDLIAYAETEDKLRDIIKENENKPDYGSNRFDWWQIVNAHTHAIVDRG</sequence>
<reference key="1">
    <citation type="journal article" date="1985" name="J. Mol. Biol.">
        <title>Sequence organization and control of transcription in the bacteriophage T4 tRNA region.</title>
        <authorList>
            <person name="Broida J."/>
            <person name="Abelson J."/>
        </authorList>
    </citation>
    <scope>NUCLEOTIDE SEQUENCE [GENOMIC DNA]</scope>
</reference>
<reference key="2">
    <citation type="journal article" date="2003" name="Microbiol. Mol. Biol. Rev.">
        <title>Bacteriophage T4 genome.</title>
        <authorList>
            <person name="Miller E.S."/>
            <person name="Kutter E."/>
            <person name="Mosig G."/>
            <person name="Arisaka F."/>
            <person name="Kunisawa T."/>
            <person name="Ruger W."/>
        </authorList>
    </citation>
    <scope>NUCLEOTIDE SEQUENCE [LARGE SCALE GENOMIC DNA]</scope>
</reference>